<accession>B4U2J8</accession>
<feature type="chain" id="PRO_1000100689" description="Cytidylate kinase">
    <location>
        <begin position="1"/>
        <end position="226"/>
    </location>
</feature>
<feature type="binding site" evidence="1">
    <location>
        <begin position="10"/>
        <end position="18"/>
    </location>
    <ligand>
        <name>ATP</name>
        <dbReference type="ChEBI" id="CHEBI:30616"/>
    </ligand>
</feature>
<dbReference type="EC" id="2.7.4.25" evidence="1"/>
<dbReference type="EMBL" id="CP001129">
    <property type="protein sequence ID" value="ACG62215.1"/>
    <property type="molecule type" value="Genomic_DNA"/>
</dbReference>
<dbReference type="RefSeq" id="WP_012515488.1">
    <property type="nucleotide sequence ID" value="NC_011134.1"/>
</dbReference>
<dbReference type="SMR" id="B4U2J8"/>
<dbReference type="GeneID" id="83704732"/>
<dbReference type="KEGG" id="sez:Sez_0856"/>
<dbReference type="HOGENOM" id="CLU_079959_0_2_9"/>
<dbReference type="Proteomes" id="UP000001873">
    <property type="component" value="Chromosome"/>
</dbReference>
<dbReference type="GO" id="GO:0005829">
    <property type="term" value="C:cytosol"/>
    <property type="evidence" value="ECO:0007669"/>
    <property type="project" value="TreeGrafter"/>
</dbReference>
<dbReference type="GO" id="GO:0005524">
    <property type="term" value="F:ATP binding"/>
    <property type="evidence" value="ECO:0007669"/>
    <property type="project" value="UniProtKB-UniRule"/>
</dbReference>
<dbReference type="GO" id="GO:0036430">
    <property type="term" value="F:CMP kinase activity"/>
    <property type="evidence" value="ECO:0007669"/>
    <property type="project" value="RHEA"/>
</dbReference>
<dbReference type="GO" id="GO:0036431">
    <property type="term" value="F:dCMP kinase activity"/>
    <property type="evidence" value="ECO:0007669"/>
    <property type="project" value="RHEA"/>
</dbReference>
<dbReference type="GO" id="GO:0015949">
    <property type="term" value="P:nucleobase-containing small molecule interconversion"/>
    <property type="evidence" value="ECO:0007669"/>
    <property type="project" value="TreeGrafter"/>
</dbReference>
<dbReference type="GO" id="GO:0006220">
    <property type="term" value="P:pyrimidine nucleotide metabolic process"/>
    <property type="evidence" value="ECO:0007669"/>
    <property type="project" value="UniProtKB-UniRule"/>
</dbReference>
<dbReference type="CDD" id="cd02020">
    <property type="entry name" value="CMPK"/>
    <property type="match status" value="1"/>
</dbReference>
<dbReference type="FunFam" id="3.40.50.300:FF:000484">
    <property type="entry name" value="Cytidylate kinase"/>
    <property type="match status" value="1"/>
</dbReference>
<dbReference type="Gene3D" id="3.40.50.300">
    <property type="entry name" value="P-loop containing nucleotide triphosphate hydrolases"/>
    <property type="match status" value="1"/>
</dbReference>
<dbReference type="HAMAP" id="MF_00238">
    <property type="entry name" value="Cytidyl_kinase_type1"/>
    <property type="match status" value="1"/>
</dbReference>
<dbReference type="InterPro" id="IPR003136">
    <property type="entry name" value="Cytidylate_kin"/>
</dbReference>
<dbReference type="InterPro" id="IPR011994">
    <property type="entry name" value="Cytidylate_kinase_dom"/>
</dbReference>
<dbReference type="InterPro" id="IPR027417">
    <property type="entry name" value="P-loop_NTPase"/>
</dbReference>
<dbReference type="NCBIfam" id="TIGR00017">
    <property type="entry name" value="cmk"/>
    <property type="match status" value="1"/>
</dbReference>
<dbReference type="PANTHER" id="PTHR21299:SF2">
    <property type="entry name" value="CYTIDYLATE KINASE"/>
    <property type="match status" value="1"/>
</dbReference>
<dbReference type="PANTHER" id="PTHR21299">
    <property type="entry name" value="CYTIDYLATE KINASE/PANTOATE-BETA-ALANINE LIGASE"/>
    <property type="match status" value="1"/>
</dbReference>
<dbReference type="Pfam" id="PF02224">
    <property type="entry name" value="Cytidylate_kin"/>
    <property type="match status" value="1"/>
</dbReference>
<dbReference type="SUPFAM" id="SSF52540">
    <property type="entry name" value="P-loop containing nucleoside triphosphate hydrolases"/>
    <property type="match status" value="1"/>
</dbReference>
<name>KCY_STREM</name>
<gene>
    <name evidence="1" type="primary">cmk</name>
    <name type="ordered locus">Sez_0856</name>
</gene>
<sequence length="226" mass="25062">MKAIRIAIDGPASSGKSTVAKIIAKNLGYTYLDTGAMYRSATYIALKNGYHKEDVNLILQELAERPISFKKAADGSQLVFLGDQDVTMAIRQNDVTNNVSWVSALPEIREELVKQQRRIARTGAIIMDGRDIGTVVLPDAELKIFLIASVEERAQRRYQENIEKGIATDFDTLKTEIAARDYKDSHRQVSPLKAADDAIIFDTTGITISAVVQFIQEKAEKIIDMA</sequence>
<organism>
    <name type="scientific">Streptococcus equi subsp. zooepidemicus (strain MGCS10565)</name>
    <dbReference type="NCBI Taxonomy" id="552526"/>
    <lineage>
        <taxon>Bacteria</taxon>
        <taxon>Bacillati</taxon>
        <taxon>Bacillota</taxon>
        <taxon>Bacilli</taxon>
        <taxon>Lactobacillales</taxon>
        <taxon>Streptococcaceae</taxon>
        <taxon>Streptococcus</taxon>
    </lineage>
</organism>
<proteinExistence type="inferred from homology"/>
<keyword id="KW-0067">ATP-binding</keyword>
<keyword id="KW-0963">Cytoplasm</keyword>
<keyword id="KW-0418">Kinase</keyword>
<keyword id="KW-0547">Nucleotide-binding</keyword>
<keyword id="KW-0808">Transferase</keyword>
<evidence type="ECO:0000255" key="1">
    <source>
        <dbReference type="HAMAP-Rule" id="MF_00238"/>
    </source>
</evidence>
<reference key="1">
    <citation type="journal article" date="2008" name="PLoS ONE">
        <title>Genome sequence of a lancefield group C Streptococcus zooepidemicus strain causing epidemic nephritis: new information about an old disease.</title>
        <authorList>
            <person name="Beres S.B."/>
            <person name="Sesso R."/>
            <person name="Pinto S.W.L."/>
            <person name="Hoe N.P."/>
            <person name="Porcella S.F."/>
            <person name="Deleo F.R."/>
            <person name="Musser J.M."/>
        </authorList>
    </citation>
    <scope>NUCLEOTIDE SEQUENCE [LARGE SCALE GENOMIC DNA]</scope>
    <source>
        <strain>MGCS10565</strain>
    </source>
</reference>
<comment type="catalytic activity">
    <reaction evidence="1">
        <text>CMP + ATP = CDP + ADP</text>
        <dbReference type="Rhea" id="RHEA:11600"/>
        <dbReference type="ChEBI" id="CHEBI:30616"/>
        <dbReference type="ChEBI" id="CHEBI:58069"/>
        <dbReference type="ChEBI" id="CHEBI:60377"/>
        <dbReference type="ChEBI" id="CHEBI:456216"/>
        <dbReference type="EC" id="2.7.4.25"/>
    </reaction>
</comment>
<comment type="catalytic activity">
    <reaction evidence="1">
        <text>dCMP + ATP = dCDP + ADP</text>
        <dbReference type="Rhea" id="RHEA:25094"/>
        <dbReference type="ChEBI" id="CHEBI:30616"/>
        <dbReference type="ChEBI" id="CHEBI:57566"/>
        <dbReference type="ChEBI" id="CHEBI:58593"/>
        <dbReference type="ChEBI" id="CHEBI:456216"/>
        <dbReference type="EC" id="2.7.4.25"/>
    </reaction>
</comment>
<comment type="subcellular location">
    <subcellularLocation>
        <location evidence="1">Cytoplasm</location>
    </subcellularLocation>
</comment>
<comment type="similarity">
    <text evidence="1">Belongs to the cytidylate kinase family. Type 1 subfamily.</text>
</comment>
<protein>
    <recommendedName>
        <fullName evidence="1">Cytidylate kinase</fullName>
        <shortName evidence="1">CK</shortName>
        <ecNumber evidence="1">2.7.4.25</ecNumber>
    </recommendedName>
    <alternativeName>
        <fullName evidence="1">Cytidine monophosphate kinase</fullName>
        <shortName evidence="1">CMP kinase</shortName>
    </alternativeName>
</protein>